<feature type="chain" id="PRO_0000378917" description="Serine palmitoyltransferase small subunit B">
    <location>
        <begin position="1"/>
        <end position="80"/>
    </location>
</feature>
<feature type="topological domain" description="Cytoplasmic" evidence="3">
    <location>
        <begin position="1"/>
        <end position="11"/>
    </location>
</feature>
<feature type="transmembrane region" description="Helical" evidence="3">
    <location>
        <begin position="12"/>
        <end position="29"/>
    </location>
</feature>
<feature type="topological domain" description="Lumenal" evidence="3">
    <location>
        <begin position="30"/>
        <end position="36"/>
    </location>
</feature>
<feature type="transmembrane region" description="Helical" evidence="3">
    <location>
        <begin position="37"/>
        <end position="57"/>
    </location>
</feature>
<feature type="topological domain" description="Cytoplasmic" evidence="3">
    <location>
        <begin position="58"/>
        <end position="80"/>
    </location>
</feature>
<evidence type="ECO:0000250" key="1">
    <source>
        <dbReference type="UniProtKB" id="Q8NFR3"/>
    </source>
</evidence>
<evidence type="ECO:0000250" key="2">
    <source>
        <dbReference type="UniProtKB" id="Q969W0"/>
    </source>
</evidence>
<evidence type="ECO:0000255" key="3"/>
<evidence type="ECO:0000305" key="4"/>
<dbReference type="EMBL" id="BC115298">
    <property type="protein sequence ID" value="AAI15299.1"/>
    <property type="molecule type" value="mRNA"/>
</dbReference>
<dbReference type="RefSeq" id="NP_001153305.1">
    <property type="nucleotide sequence ID" value="NM_001159833.1"/>
</dbReference>
<dbReference type="RefSeq" id="NP_001289737.1">
    <property type="nucleotide sequence ID" value="NM_001302808.1"/>
</dbReference>
<dbReference type="SMR" id="Q1RLT2"/>
<dbReference type="FunCoup" id="Q1RLT2">
    <property type="interactions" value="17"/>
</dbReference>
<dbReference type="STRING" id="7955.ENSDARP00000127984"/>
<dbReference type="PaxDb" id="7955-ENSDARP00000127984"/>
<dbReference type="Ensembl" id="ENSDART00000155579">
    <property type="protein sequence ID" value="ENSDARP00000127984"/>
    <property type="gene ID" value="ENSDARG00000091658"/>
</dbReference>
<dbReference type="Ensembl" id="ENSDART00000181382">
    <property type="protein sequence ID" value="ENSDARP00000154838"/>
    <property type="gene ID" value="ENSDARG00000091658"/>
</dbReference>
<dbReference type="GeneID" id="678546"/>
<dbReference type="KEGG" id="dre:678546"/>
<dbReference type="AGR" id="ZFIN:ZDB-GENE-060421-6887"/>
<dbReference type="CTD" id="165679"/>
<dbReference type="ZFIN" id="ZDB-GENE-060421-6887">
    <property type="gene designation" value="sptssb"/>
</dbReference>
<dbReference type="eggNOG" id="ENOG502S4Q9">
    <property type="taxonomic scope" value="Eukaryota"/>
</dbReference>
<dbReference type="HOGENOM" id="CLU_187811_0_0_1"/>
<dbReference type="InParanoid" id="Q1RLT2"/>
<dbReference type="OMA" id="NFKNMRE"/>
<dbReference type="OrthoDB" id="202672at2759"/>
<dbReference type="PhylomeDB" id="Q1RLT2"/>
<dbReference type="Reactome" id="R-DRE-1660661">
    <property type="pathway name" value="Sphingolipid de novo biosynthesis"/>
</dbReference>
<dbReference type="UniPathway" id="UPA00222"/>
<dbReference type="PRO" id="PR:Q1RLT2"/>
<dbReference type="Proteomes" id="UP000000437">
    <property type="component" value="Chromosome 15"/>
</dbReference>
<dbReference type="Bgee" id="ENSDARG00000091658">
    <property type="expression patterns" value="Expressed in intestine and 4 other cell types or tissues"/>
</dbReference>
<dbReference type="GO" id="GO:0005789">
    <property type="term" value="C:endoplasmic reticulum membrane"/>
    <property type="evidence" value="ECO:0007669"/>
    <property type="project" value="UniProtKB-SubCell"/>
</dbReference>
<dbReference type="GO" id="GO:0017059">
    <property type="term" value="C:serine palmitoyltransferase complex"/>
    <property type="evidence" value="ECO:0000250"/>
    <property type="project" value="UniProtKB"/>
</dbReference>
<dbReference type="GO" id="GO:0046513">
    <property type="term" value="P:ceramide biosynthetic process"/>
    <property type="evidence" value="ECO:0000250"/>
    <property type="project" value="UniProtKB"/>
</dbReference>
<dbReference type="GO" id="GO:0007029">
    <property type="term" value="P:endoplasmic reticulum organization"/>
    <property type="evidence" value="ECO:0000250"/>
    <property type="project" value="UniProtKB"/>
</dbReference>
<dbReference type="GO" id="GO:0030148">
    <property type="term" value="P:sphingolipid biosynthetic process"/>
    <property type="evidence" value="ECO:0000250"/>
    <property type="project" value="UniProtKB"/>
</dbReference>
<dbReference type="InterPro" id="IPR024512">
    <property type="entry name" value="Ser_palmitoyltrfase_ssu-like"/>
</dbReference>
<dbReference type="PANTHER" id="PTHR28612">
    <property type="entry name" value="SERINE PALMITOYLTRANSFERASE SMALL SUBUNIT B"/>
    <property type="match status" value="1"/>
</dbReference>
<dbReference type="PANTHER" id="PTHR28612:SF1">
    <property type="entry name" value="SERINE PALMITOYLTRANSFERASE SMALL SUBUNIT B"/>
    <property type="match status" value="1"/>
</dbReference>
<dbReference type="Pfam" id="PF11779">
    <property type="entry name" value="SPT_ssu-like"/>
    <property type="match status" value="1"/>
</dbReference>
<comment type="function">
    <text evidence="1">Component of the serine palmitoyltransferase multisubunit enzyme (SPT) that catalyzes the initial and rate-limiting step in sphingolipid biosynthesis by condensing L-serine and activated acyl-CoA (most commonly palmitoyl-CoA) to form long-chain bases. The SPT complex is composed of SPTLC1, SPTLC2 or SPTLC3 and SPTSSA or SPTSSB. Within this complex, the heterodimer consisting of SPTLC1 and SPTLC2/SPTLC3 forms the catalytic core. Within the SPT complex, SPTSSB stimulates the catalytic activity and plays a role in substrate specificity. SPT complexes with this subunit showing a preference for longer acyl-CoAs. The SPTLC1-SPTLC2-SPTSSB complex shows a strong preference for C18-CoA substrate, while the SPTLC1-SPTLC3-SPTSSB isozyme displays an ability to use a broader range of acyl-CoAs, without apparent preference.</text>
</comment>
<comment type="pathway">
    <text>Lipid metabolism; sphingolipid metabolism.</text>
</comment>
<comment type="subunit">
    <text evidence="1 2">Component of the serine palmitoyltransferase (SPT) complex, which is composed of SPTLC1, SPTLC2 or SPTLC3 and SPTSSA or SPTSSB. The heterodimer consisting of SPTLC1 and SPTLC2/SPTLC3 forms the catalytic core of the enzyme, while SPTSSA or SPTSSB subunits determine substrate specificity (By similarity). SPT also interacts with ORMDL proteins, especially ORMDL3, which negatively regulate SPT activity in the presence of ceramides (By similarity).</text>
</comment>
<comment type="subcellular location">
    <subcellularLocation>
        <location evidence="4">Endoplasmic reticulum membrane</location>
        <topology evidence="4">Multi-pass membrane protein</topology>
    </subcellularLocation>
</comment>
<comment type="similarity">
    <text evidence="4">Belongs to the SPTSS family. SPTSSB subfamily.</text>
</comment>
<keyword id="KW-0256">Endoplasmic reticulum</keyword>
<keyword id="KW-0443">Lipid metabolism</keyword>
<keyword id="KW-0472">Membrane</keyword>
<keyword id="KW-1185">Reference proteome</keyword>
<keyword id="KW-0746">Sphingolipid metabolism</keyword>
<keyword id="KW-0812">Transmembrane</keyword>
<keyword id="KW-1133">Transmembrane helix</keyword>
<name>SPTSB_DANRE</name>
<proteinExistence type="inferred from homology"/>
<protein>
    <recommendedName>
        <fullName>Serine palmitoyltransferase small subunit B</fullName>
    </recommendedName>
    <alternativeName>
        <fullName>Protein ADMP</fullName>
    </alternativeName>
    <alternativeName>
        <fullName>Small subunit of serine palmitoyltransferase B</fullName>
        <shortName>ssSPTb</shortName>
    </alternativeName>
</protein>
<accession>Q1RLT2</accession>
<sequence length="80" mass="9477">MDMKNMREYMSWLYYQYLLITGIYVLEPWEQSIFNTVLFTMVAMVIYTSYVFVPIHVRLALEFFCELVGGQPESTVALMT</sequence>
<reference key="1">
    <citation type="submission" date="2006-04" db="EMBL/GenBank/DDBJ databases">
        <authorList>
            <consortium name="NIH - Zebrafish Gene Collection (ZGC) project"/>
        </authorList>
    </citation>
    <scope>NUCLEOTIDE SEQUENCE [LARGE SCALE MRNA]</scope>
</reference>
<gene>
    <name type="primary">sptssb</name>
    <name type="synonym">admp</name>
    <name type="synonym">sssptb</name>
    <name type="ORF">zgc:136867</name>
</gene>
<organism>
    <name type="scientific">Danio rerio</name>
    <name type="common">Zebrafish</name>
    <name type="synonym">Brachydanio rerio</name>
    <dbReference type="NCBI Taxonomy" id="7955"/>
    <lineage>
        <taxon>Eukaryota</taxon>
        <taxon>Metazoa</taxon>
        <taxon>Chordata</taxon>
        <taxon>Craniata</taxon>
        <taxon>Vertebrata</taxon>
        <taxon>Euteleostomi</taxon>
        <taxon>Actinopterygii</taxon>
        <taxon>Neopterygii</taxon>
        <taxon>Teleostei</taxon>
        <taxon>Ostariophysi</taxon>
        <taxon>Cypriniformes</taxon>
        <taxon>Danionidae</taxon>
        <taxon>Danioninae</taxon>
        <taxon>Danio</taxon>
    </lineage>
</organism>